<comment type="function">
    <text evidence="1">Probable methyltransferase.</text>
</comment>
<comment type="subcellular location">
    <subcellularLocation>
        <location evidence="2">Cytoplasm</location>
    </subcellularLocation>
    <subcellularLocation>
        <location evidence="2">Nucleus</location>
    </subcellularLocation>
</comment>
<comment type="similarity">
    <text evidence="3">Belongs to the methyltransferase superfamily.</text>
</comment>
<evidence type="ECO:0000250" key="1"/>
<evidence type="ECO:0000269" key="2">
    <source>
    </source>
</evidence>
<evidence type="ECO:0000305" key="3"/>
<proteinExistence type="inferred from homology"/>
<dbReference type="EC" id="2.1.1.-"/>
<dbReference type="EMBL" id="CU329670">
    <property type="protein sequence ID" value="CAB61775.1"/>
    <property type="molecule type" value="Genomic_DNA"/>
</dbReference>
<dbReference type="PIR" id="T50196">
    <property type="entry name" value="T50196"/>
</dbReference>
<dbReference type="RefSeq" id="NP_594469.1">
    <property type="nucleotide sequence ID" value="NM_001019898.2"/>
</dbReference>
<dbReference type="SMR" id="Q9UTA9"/>
<dbReference type="BioGRID" id="278154">
    <property type="interactions" value="7"/>
</dbReference>
<dbReference type="FunCoup" id="Q9UTA9">
    <property type="interactions" value="224"/>
</dbReference>
<dbReference type="STRING" id="284812.Q9UTA9"/>
<dbReference type="iPTMnet" id="Q9UTA9"/>
<dbReference type="PaxDb" id="4896-SPAC25B8.09.1"/>
<dbReference type="EnsemblFungi" id="SPAC25B8.09.1">
    <property type="protein sequence ID" value="SPAC25B8.09.1:pep"/>
    <property type="gene ID" value="SPAC25B8.09"/>
</dbReference>
<dbReference type="KEGG" id="spo:2541658"/>
<dbReference type="PomBase" id="SPAC25B8.09"/>
<dbReference type="VEuPathDB" id="FungiDB:SPAC25B8.09"/>
<dbReference type="eggNOG" id="KOG3010">
    <property type="taxonomic scope" value="Eukaryota"/>
</dbReference>
<dbReference type="HOGENOM" id="CLU_049344_3_0_1"/>
<dbReference type="InParanoid" id="Q9UTA9"/>
<dbReference type="PhylomeDB" id="Q9UTA9"/>
<dbReference type="PRO" id="PR:Q9UTA9"/>
<dbReference type="Proteomes" id="UP000002485">
    <property type="component" value="Chromosome I"/>
</dbReference>
<dbReference type="GO" id="GO:0005829">
    <property type="term" value="C:cytosol"/>
    <property type="evidence" value="ECO:0007005"/>
    <property type="project" value="PomBase"/>
</dbReference>
<dbReference type="GO" id="GO:0005634">
    <property type="term" value="C:nucleus"/>
    <property type="evidence" value="ECO:0007005"/>
    <property type="project" value="PomBase"/>
</dbReference>
<dbReference type="GO" id="GO:0008168">
    <property type="term" value="F:methyltransferase activity"/>
    <property type="evidence" value="ECO:0000318"/>
    <property type="project" value="GO_Central"/>
</dbReference>
<dbReference type="GO" id="GO:0046547">
    <property type="term" value="F:trans-aconitate 3-methyltransferase activity"/>
    <property type="evidence" value="ECO:0000266"/>
    <property type="project" value="PomBase"/>
</dbReference>
<dbReference type="GO" id="GO:1990748">
    <property type="term" value="P:cellular detoxification"/>
    <property type="evidence" value="ECO:0000250"/>
    <property type="project" value="PomBase"/>
</dbReference>
<dbReference type="GO" id="GO:0034198">
    <property type="term" value="P:cellular response to amino acid starvation"/>
    <property type="evidence" value="ECO:0000266"/>
    <property type="project" value="PomBase"/>
</dbReference>
<dbReference type="GO" id="GO:0032259">
    <property type="term" value="P:methylation"/>
    <property type="evidence" value="ECO:0007669"/>
    <property type="project" value="UniProtKB-KW"/>
</dbReference>
<dbReference type="CDD" id="cd02440">
    <property type="entry name" value="AdoMet_MTases"/>
    <property type="match status" value="1"/>
</dbReference>
<dbReference type="FunFam" id="3.40.50.150:FF:000965">
    <property type="entry name" value="Uncharacterized methyltransferase-like C25B8.10"/>
    <property type="match status" value="1"/>
</dbReference>
<dbReference type="Gene3D" id="3.40.50.150">
    <property type="entry name" value="Vaccinia Virus protein VP39"/>
    <property type="match status" value="1"/>
</dbReference>
<dbReference type="InterPro" id="IPR051052">
    <property type="entry name" value="Diverse_substrate_MTase"/>
</dbReference>
<dbReference type="InterPro" id="IPR013216">
    <property type="entry name" value="Methyltransf_11"/>
</dbReference>
<dbReference type="InterPro" id="IPR029063">
    <property type="entry name" value="SAM-dependent_MTases_sf"/>
</dbReference>
<dbReference type="PANTHER" id="PTHR44942">
    <property type="entry name" value="METHYLTRANSF_11 DOMAIN-CONTAINING PROTEIN"/>
    <property type="match status" value="1"/>
</dbReference>
<dbReference type="PANTHER" id="PTHR44942:SF4">
    <property type="entry name" value="METHYLTRANSFERASE TYPE 11 DOMAIN-CONTAINING PROTEIN"/>
    <property type="match status" value="1"/>
</dbReference>
<dbReference type="Pfam" id="PF08241">
    <property type="entry name" value="Methyltransf_11"/>
    <property type="match status" value="1"/>
</dbReference>
<dbReference type="SUPFAM" id="SSF53335">
    <property type="entry name" value="S-adenosyl-L-methionine-dependent methyltransferases"/>
    <property type="match status" value="1"/>
</dbReference>
<protein>
    <recommendedName>
        <fullName>Uncharacterized methyltransferase C25B8.09</fullName>
        <ecNumber>2.1.1.-</ecNumber>
    </recommendedName>
</protein>
<sequence length="251" mass="28469">MIGRTFKTDIADYETARPDYPPQITEWLNDEFSVNETSTILELGAGSGKLTPRIIASQPKEIIAVDTYVEMLDVLKKKFPNVDCRVGSAMAIPLEDESVDLVACGQCFHWFANEEALKEIYRVLKPNGKLALIWNIRDNSVPWVEKCSQLLEKCRGGPLNMFEKAAELFPGYGFTELKQSLFTSAKKYSIEDLHRLMNSFSSINRLPVEEKEKMHAELDEIIKTIPRAQNTDQVDFNILTVAYSSEKVPIN</sequence>
<name>YL89_SCHPO</name>
<accession>Q9UTA9</accession>
<reference key="1">
    <citation type="journal article" date="2002" name="Nature">
        <title>The genome sequence of Schizosaccharomyces pombe.</title>
        <authorList>
            <person name="Wood V."/>
            <person name="Gwilliam R."/>
            <person name="Rajandream M.A."/>
            <person name="Lyne M.H."/>
            <person name="Lyne R."/>
            <person name="Stewart A."/>
            <person name="Sgouros J.G."/>
            <person name="Peat N."/>
            <person name="Hayles J."/>
            <person name="Baker S.G."/>
            <person name="Basham D."/>
            <person name="Bowman S."/>
            <person name="Brooks K."/>
            <person name="Brown D."/>
            <person name="Brown S."/>
            <person name="Chillingworth T."/>
            <person name="Churcher C.M."/>
            <person name="Collins M."/>
            <person name="Connor R."/>
            <person name="Cronin A."/>
            <person name="Davis P."/>
            <person name="Feltwell T."/>
            <person name="Fraser A."/>
            <person name="Gentles S."/>
            <person name="Goble A."/>
            <person name="Hamlin N."/>
            <person name="Harris D.E."/>
            <person name="Hidalgo J."/>
            <person name="Hodgson G."/>
            <person name="Holroyd S."/>
            <person name="Hornsby T."/>
            <person name="Howarth S."/>
            <person name="Huckle E.J."/>
            <person name="Hunt S."/>
            <person name="Jagels K."/>
            <person name="James K.D."/>
            <person name="Jones L."/>
            <person name="Jones M."/>
            <person name="Leather S."/>
            <person name="McDonald S."/>
            <person name="McLean J."/>
            <person name="Mooney P."/>
            <person name="Moule S."/>
            <person name="Mungall K.L."/>
            <person name="Murphy L.D."/>
            <person name="Niblett D."/>
            <person name="Odell C."/>
            <person name="Oliver K."/>
            <person name="O'Neil S."/>
            <person name="Pearson D."/>
            <person name="Quail M.A."/>
            <person name="Rabbinowitsch E."/>
            <person name="Rutherford K.M."/>
            <person name="Rutter S."/>
            <person name="Saunders D."/>
            <person name="Seeger K."/>
            <person name="Sharp S."/>
            <person name="Skelton J."/>
            <person name="Simmonds M.N."/>
            <person name="Squares R."/>
            <person name="Squares S."/>
            <person name="Stevens K."/>
            <person name="Taylor K."/>
            <person name="Taylor R.G."/>
            <person name="Tivey A."/>
            <person name="Walsh S.V."/>
            <person name="Warren T."/>
            <person name="Whitehead S."/>
            <person name="Woodward J.R."/>
            <person name="Volckaert G."/>
            <person name="Aert R."/>
            <person name="Robben J."/>
            <person name="Grymonprez B."/>
            <person name="Weltjens I."/>
            <person name="Vanstreels E."/>
            <person name="Rieger M."/>
            <person name="Schaefer M."/>
            <person name="Mueller-Auer S."/>
            <person name="Gabel C."/>
            <person name="Fuchs M."/>
            <person name="Duesterhoeft A."/>
            <person name="Fritzc C."/>
            <person name="Holzer E."/>
            <person name="Moestl D."/>
            <person name="Hilbert H."/>
            <person name="Borzym K."/>
            <person name="Langer I."/>
            <person name="Beck A."/>
            <person name="Lehrach H."/>
            <person name="Reinhardt R."/>
            <person name="Pohl T.M."/>
            <person name="Eger P."/>
            <person name="Zimmermann W."/>
            <person name="Wedler H."/>
            <person name="Wambutt R."/>
            <person name="Purnelle B."/>
            <person name="Goffeau A."/>
            <person name="Cadieu E."/>
            <person name="Dreano S."/>
            <person name="Gloux S."/>
            <person name="Lelaure V."/>
            <person name="Mottier S."/>
            <person name="Galibert F."/>
            <person name="Aves S.J."/>
            <person name="Xiang Z."/>
            <person name="Hunt C."/>
            <person name="Moore K."/>
            <person name="Hurst S.M."/>
            <person name="Lucas M."/>
            <person name="Rochet M."/>
            <person name="Gaillardin C."/>
            <person name="Tallada V.A."/>
            <person name="Garzon A."/>
            <person name="Thode G."/>
            <person name="Daga R.R."/>
            <person name="Cruzado L."/>
            <person name="Jimenez J."/>
            <person name="Sanchez M."/>
            <person name="del Rey F."/>
            <person name="Benito J."/>
            <person name="Dominguez A."/>
            <person name="Revuelta J.L."/>
            <person name="Moreno S."/>
            <person name="Armstrong J."/>
            <person name="Forsburg S.L."/>
            <person name="Cerutti L."/>
            <person name="Lowe T."/>
            <person name="McCombie W.R."/>
            <person name="Paulsen I."/>
            <person name="Potashkin J."/>
            <person name="Shpakovski G.V."/>
            <person name="Ussery D."/>
            <person name="Barrell B.G."/>
            <person name="Nurse P."/>
        </authorList>
    </citation>
    <scope>NUCLEOTIDE SEQUENCE [LARGE SCALE GENOMIC DNA]</scope>
    <source>
        <strain>972 / ATCC 24843</strain>
    </source>
</reference>
<reference key="2">
    <citation type="journal article" date="2006" name="Nat. Biotechnol.">
        <title>ORFeome cloning and global analysis of protein localization in the fission yeast Schizosaccharomyces pombe.</title>
        <authorList>
            <person name="Matsuyama A."/>
            <person name="Arai R."/>
            <person name="Yashiroda Y."/>
            <person name="Shirai A."/>
            <person name="Kamata A."/>
            <person name="Sekido S."/>
            <person name="Kobayashi Y."/>
            <person name="Hashimoto A."/>
            <person name="Hamamoto M."/>
            <person name="Hiraoka Y."/>
            <person name="Horinouchi S."/>
            <person name="Yoshida M."/>
        </authorList>
    </citation>
    <scope>SUBCELLULAR LOCATION [LARGE SCALE ANALYSIS]</scope>
</reference>
<gene>
    <name type="ORF">SPAC25B8.09</name>
</gene>
<feature type="chain" id="PRO_0000339154" description="Uncharacterized methyltransferase C25B8.09">
    <location>
        <begin position="1"/>
        <end position="251"/>
    </location>
</feature>
<keyword id="KW-0963">Cytoplasm</keyword>
<keyword id="KW-0489">Methyltransferase</keyword>
<keyword id="KW-0539">Nucleus</keyword>
<keyword id="KW-1185">Reference proteome</keyword>
<keyword id="KW-0808">Transferase</keyword>
<organism>
    <name type="scientific">Schizosaccharomyces pombe (strain 972 / ATCC 24843)</name>
    <name type="common">Fission yeast</name>
    <dbReference type="NCBI Taxonomy" id="284812"/>
    <lineage>
        <taxon>Eukaryota</taxon>
        <taxon>Fungi</taxon>
        <taxon>Dikarya</taxon>
        <taxon>Ascomycota</taxon>
        <taxon>Taphrinomycotina</taxon>
        <taxon>Schizosaccharomycetes</taxon>
        <taxon>Schizosaccharomycetales</taxon>
        <taxon>Schizosaccharomycetaceae</taxon>
        <taxon>Schizosaccharomyces</taxon>
    </lineage>
</organism>